<proteinExistence type="evidence at transcript level"/>
<dbReference type="EMBL" id="M36467">
    <property type="protein sequence ID" value="AAA42686.1"/>
    <property type="molecule type" value="Genomic_DNA"/>
</dbReference>
<dbReference type="EMBL" id="U18466">
    <property type="protein sequence ID" value="AAA65245.1"/>
    <property type="molecule type" value="Genomic_DNA"/>
</dbReference>
<dbReference type="PIR" id="C43702">
    <property type="entry name" value="C43702"/>
</dbReference>
<dbReference type="RefSeq" id="NP_042709.1">
    <property type="nucleotide sequence ID" value="NC_001659.2"/>
</dbReference>
<dbReference type="GeneID" id="22220399"/>
<dbReference type="KEGG" id="vg:22220399"/>
<dbReference type="Proteomes" id="UP000000624">
    <property type="component" value="Segment"/>
</dbReference>
<dbReference type="GO" id="GO:0044172">
    <property type="term" value="C:host cell endoplasmic reticulum-Golgi intermediate compartment"/>
    <property type="evidence" value="ECO:0007669"/>
    <property type="project" value="UniProtKB-SubCell"/>
</dbReference>
<dbReference type="GO" id="GO:0044423">
    <property type="term" value="C:virion component"/>
    <property type="evidence" value="ECO:0007669"/>
    <property type="project" value="UniProtKB-KW"/>
</dbReference>
<dbReference type="InterPro" id="IPR004848">
    <property type="entry name" value="ASFV_fam_110"/>
</dbReference>
<dbReference type="Pfam" id="PF01639">
    <property type="entry name" value="v110"/>
    <property type="match status" value="1"/>
</dbReference>
<keyword id="KW-0244">Early protein</keyword>
<keyword id="KW-0325">Glycoprotein</keyword>
<keyword id="KW-1185">Reference proteome</keyword>
<keyword id="KW-0732">Signal</keyword>
<keyword id="KW-0946">Virion</keyword>
<name>1104L_ASFB7</name>
<evidence type="ECO:0000250" key="1">
    <source>
        <dbReference type="UniProtKB" id="A9JLI5"/>
    </source>
</evidence>
<evidence type="ECO:0000255" key="2"/>
<evidence type="ECO:0000269" key="3">
    <source>
    </source>
</evidence>
<evidence type="ECO:0000269" key="4">
    <source>
    </source>
</evidence>
<evidence type="ECO:0000269" key="5">
    <source>
    </source>
</evidence>
<evidence type="ECO:0000305" key="6"/>
<reference key="1">
    <citation type="journal article" date="1990" name="J. Virol.">
        <title>Multigene families in African swine fever virus: family 110.</title>
        <authorList>
            <person name="Almendral J.M."/>
            <person name="Almazan F."/>
            <person name="Blasco R."/>
            <person name="Vinuela E."/>
        </authorList>
    </citation>
    <scope>NUCLEOTIDE SEQUENCE [GENOMIC DNA]</scope>
</reference>
<reference key="2">
    <citation type="journal article" date="1995" name="Virology">
        <title>Analysis of the complete nucleotide sequence of African swine fever virus.</title>
        <authorList>
            <person name="Yanez R.J."/>
            <person name="Rodriguez J.M."/>
            <person name="Nogal M.L."/>
            <person name="Yuste L."/>
            <person name="Enriquez C."/>
            <person name="Rodriguez J.F."/>
            <person name="Vinuela E."/>
        </authorList>
    </citation>
    <scope>NUCLEOTIDE SEQUENCE [LARGE SCALE GENOMIC DNA]</scope>
</reference>
<reference key="3">
    <citation type="journal article" date="1998" name="J. Virol.">
        <title>African swine fever virus is wrapped by the endoplasmic reticulum.</title>
        <authorList>
            <person name="Rouiller I."/>
            <person name="Brookes S.M."/>
            <person name="Hyatt A.D."/>
            <person name="Windsor M."/>
            <person name="Wileman T."/>
        </authorList>
    </citation>
    <scope>SUBCELLULAR LOCATION</scope>
</reference>
<reference key="4">
    <citation type="journal article" date="2004" name="J. Virol.">
        <title>The subcellular distribution of multigene family 110 proteins of African swine fever virus is determined by differences in C-terminal KDEL endoplasmic reticulum retention motifs.</title>
        <authorList>
            <person name="Netherton C."/>
            <person name="Rouiller I."/>
            <person name="Wileman T."/>
        </authorList>
    </citation>
    <scope>SUBCELLULAR LOCATION</scope>
    <scope>FUNCTION</scope>
</reference>
<reference key="5">
    <citation type="journal article" date="2020" name="J. Virol.">
        <title>The African Swine Fever Virus Transcriptome.</title>
        <authorList>
            <person name="Cackett G."/>
            <person name="Matelska D."/>
            <person name="Sykora M."/>
            <person name="Portugal R."/>
            <person name="Malecki M."/>
            <person name="Baehler J."/>
            <person name="Dixon L."/>
            <person name="Werner F."/>
        </authorList>
    </citation>
    <scope>INDUCTION</scope>
</reference>
<gene>
    <name type="ordered locus">BA71V-011</name>
    <name type="ordered locus">BA71V-012</name>
    <name type="ORF">XP124L</name>
</gene>
<protein>
    <recommendedName>
        <fullName>Protein MGF 110-4L</fullName>
    </recommendedName>
</protein>
<organism>
    <name type="scientific">African swine fever virus (strain Badajoz 1971 Vero-adapted)</name>
    <name type="common">Ba71V</name>
    <name type="synonym">ASFV</name>
    <dbReference type="NCBI Taxonomy" id="10498"/>
    <lineage>
        <taxon>Viruses</taxon>
        <taxon>Varidnaviria</taxon>
        <taxon>Bamfordvirae</taxon>
        <taxon>Nucleocytoviricota</taxon>
        <taxon>Pokkesviricetes</taxon>
        <taxon>Asfuvirales</taxon>
        <taxon>Asfarviridae</taxon>
        <taxon>Asfivirus</taxon>
        <taxon>African swine fever virus</taxon>
    </lineage>
</organism>
<accession>P18558</accession>
<feature type="signal peptide" evidence="1">
    <location>
        <begin position="1"/>
        <end position="28"/>
    </location>
</feature>
<feature type="chain" id="PRO_0000036736" description="Protein MGF 110-4L">
    <location>
        <begin position="29"/>
        <end position="124"/>
    </location>
</feature>
<feature type="short sequence motif" description="Prevents secretion from ER" evidence="3">
    <location>
        <begin position="121"/>
        <end position="124"/>
    </location>
</feature>
<feature type="glycosylation site" description="N-linked (GlcNAc...) asparagine; by host" evidence="2">
    <location>
        <position position="64"/>
    </location>
</feature>
<sequence length="124" mass="14194">MLVIFLGILGLLANQVLGLPTQAGGHLRSTDNPPQEELGYWCTYMESCKFCWECAHGICKNKVNESMPLIIENSYLTSCEVSRWYNQCTYSEGNGHYHVMDCSNPVPHNRPHRLGRKIYEKEDL</sequence>
<organismHost>
    <name type="scientific">Ornithodoros</name>
    <name type="common">relapsing fever ticks</name>
    <dbReference type="NCBI Taxonomy" id="6937"/>
</organismHost>
<organismHost>
    <name type="scientific">Sus scrofa</name>
    <name type="common">Pig</name>
    <dbReference type="NCBI Taxonomy" id="9823"/>
</organismHost>
<comment type="function">
    <text evidence="3">Causes the redistribution of lumenal ER protein to an enlarged ERGIC compartment.</text>
</comment>
<comment type="subcellular location">
    <subcellularLocation>
        <location evidence="5">Virion</location>
    </subcellularLocation>
    <subcellularLocation>
        <location evidence="3 5">Host endoplasmic reticulum-Golgi intermediate compartment</location>
    </subcellularLocation>
</comment>
<comment type="induction">
    <text evidence="4">Expressed in the early phase of the viral replicative cycle.</text>
</comment>
<comment type="similarity">
    <text evidence="6">Belongs to the asfivirus MGF 110 family.</text>
</comment>